<organism>
    <name type="scientific">Oryza sativa subsp. japonica</name>
    <name type="common">Rice</name>
    <dbReference type="NCBI Taxonomy" id="39947"/>
    <lineage>
        <taxon>Eukaryota</taxon>
        <taxon>Viridiplantae</taxon>
        <taxon>Streptophyta</taxon>
        <taxon>Embryophyta</taxon>
        <taxon>Tracheophyta</taxon>
        <taxon>Spermatophyta</taxon>
        <taxon>Magnoliopsida</taxon>
        <taxon>Liliopsida</taxon>
        <taxon>Poales</taxon>
        <taxon>Poaceae</taxon>
        <taxon>BOP clade</taxon>
        <taxon>Oryzoideae</taxon>
        <taxon>Oryzeae</taxon>
        <taxon>Oryzinae</taxon>
        <taxon>Oryza</taxon>
        <taxon>Oryza sativa</taxon>
    </lineage>
</organism>
<accession>Q5JJY4</accession>
<accession>A0A0P0V3Q6</accession>
<proteinExistence type="evidence at transcript level"/>
<name>P2C04_ORYSJ</name>
<reference key="1">
    <citation type="journal article" date="2002" name="Nature">
        <title>The genome sequence and structure of rice chromosome 1.</title>
        <authorList>
            <person name="Sasaki T."/>
            <person name="Matsumoto T."/>
            <person name="Yamamoto K."/>
            <person name="Sakata K."/>
            <person name="Baba T."/>
            <person name="Katayose Y."/>
            <person name="Wu J."/>
            <person name="Niimura Y."/>
            <person name="Cheng Z."/>
            <person name="Nagamura Y."/>
            <person name="Antonio B.A."/>
            <person name="Kanamori H."/>
            <person name="Hosokawa S."/>
            <person name="Masukawa M."/>
            <person name="Arikawa K."/>
            <person name="Chiden Y."/>
            <person name="Hayashi M."/>
            <person name="Okamoto M."/>
            <person name="Ando T."/>
            <person name="Aoki H."/>
            <person name="Arita K."/>
            <person name="Hamada M."/>
            <person name="Harada C."/>
            <person name="Hijishita S."/>
            <person name="Honda M."/>
            <person name="Ichikawa Y."/>
            <person name="Idonuma A."/>
            <person name="Iijima M."/>
            <person name="Ikeda M."/>
            <person name="Ikeno M."/>
            <person name="Ito S."/>
            <person name="Ito T."/>
            <person name="Ito Y."/>
            <person name="Ito Y."/>
            <person name="Iwabuchi A."/>
            <person name="Kamiya K."/>
            <person name="Karasawa W."/>
            <person name="Katagiri S."/>
            <person name="Kikuta A."/>
            <person name="Kobayashi N."/>
            <person name="Kono I."/>
            <person name="Machita K."/>
            <person name="Maehara T."/>
            <person name="Mizuno H."/>
            <person name="Mizubayashi T."/>
            <person name="Mukai Y."/>
            <person name="Nagasaki H."/>
            <person name="Nakashima M."/>
            <person name="Nakama Y."/>
            <person name="Nakamichi Y."/>
            <person name="Nakamura M."/>
            <person name="Namiki N."/>
            <person name="Negishi M."/>
            <person name="Ohta I."/>
            <person name="Ono N."/>
            <person name="Saji S."/>
            <person name="Sakai K."/>
            <person name="Shibata M."/>
            <person name="Shimokawa T."/>
            <person name="Shomura A."/>
            <person name="Song J."/>
            <person name="Takazaki Y."/>
            <person name="Terasawa K."/>
            <person name="Tsuji K."/>
            <person name="Waki K."/>
            <person name="Yamagata H."/>
            <person name="Yamane H."/>
            <person name="Yoshiki S."/>
            <person name="Yoshihara R."/>
            <person name="Yukawa K."/>
            <person name="Zhong H."/>
            <person name="Iwama H."/>
            <person name="Endo T."/>
            <person name="Ito H."/>
            <person name="Hahn J.H."/>
            <person name="Kim H.-I."/>
            <person name="Eun M.-Y."/>
            <person name="Yano M."/>
            <person name="Jiang J."/>
            <person name="Gojobori T."/>
        </authorList>
    </citation>
    <scope>NUCLEOTIDE SEQUENCE [LARGE SCALE GENOMIC DNA]</scope>
    <source>
        <strain>cv. Nipponbare</strain>
    </source>
</reference>
<reference key="2">
    <citation type="journal article" date="2005" name="Nature">
        <title>The map-based sequence of the rice genome.</title>
        <authorList>
            <consortium name="International rice genome sequencing project (IRGSP)"/>
        </authorList>
    </citation>
    <scope>NUCLEOTIDE SEQUENCE [LARGE SCALE GENOMIC DNA]</scope>
    <source>
        <strain>cv. Nipponbare</strain>
    </source>
</reference>
<reference key="3">
    <citation type="journal article" date="2008" name="Nucleic Acids Res.">
        <title>The rice annotation project database (RAP-DB): 2008 update.</title>
        <authorList>
            <consortium name="The rice annotation project (RAP)"/>
        </authorList>
    </citation>
    <scope>GENOME REANNOTATION</scope>
    <source>
        <strain>cv. Nipponbare</strain>
    </source>
</reference>
<reference key="4">
    <citation type="journal article" date="2013" name="Rice">
        <title>Improvement of the Oryza sativa Nipponbare reference genome using next generation sequence and optical map data.</title>
        <authorList>
            <person name="Kawahara Y."/>
            <person name="de la Bastide M."/>
            <person name="Hamilton J.P."/>
            <person name="Kanamori H."/>
            <person name="McCombie W.R."/>
            <person name="Ouyang S."/>
            <person name="Schwartz D.C."/>
            <person name="Tanaka T."/>
            <person name="Wu J."/>
            <person name="Zhou S."/>
            <person name="Childs K.L."/>
            <person name="Davidson R.M."/>
            <person name="Lin H."/>
            <person name="Quesada-Ocampo L."/>
            <person name="Vaillancourt B."/>
            <person name="Sakai H."/>
            <person name="Lee S.S."/>
            <person name="Kim J."/>
            <person name="Numa H."/>
            <person name="Itoh T."/>
            <person name="Buell C.R."/>
            <person name="Matsumoto T."/>
        </authorList>
    </citation>
    <scope>GENOME REANNOTATION</scope>
    <source>
        <strain>cv. Nipponbare</strain>
    </source>
</reference>
<reference key="5">
    <citation type="journal article" date="2003" name="Science">
        <title>Collection, mapping, and annotation of over 28,000 cDNA clones from japonica rice.</title>
        <authorList>
            <consortium name="The rice full-length cDNA consortium"/>
        </authorList>
    </citation>
    <scope>NUCLEOTIDE SEQUENCE [LARGE SCALE MRNA] (ISOFORM 1)</scope>
    <source>
        <strain>cv. Nipponbare</strain>
    </source>
</reference>
<reference key="6">
    <citation type="journal article" date="2008" name="BMC Genomics">
        <title>Genome-wide and expression analysis of protein phosphatase 2C in rice and Arabidopsis.</title>
        <authorList>
            <person name="Xue T."/>
            <person name="Wang D."/>
            <person name="Zhang S."/>
            <person name="Ehlting J."/>
            <person name="Ni F."/>
            <person name="Jacab S."/>
            <person name="Zheng C."/>
            <person name="Zhong Y."/>
        </authorList>
    </citation>
    <scope>GENE FAMILY</scope>
    <scope>NOMENCLATURE</scope>
</reference>
<sequence length="657" mass="73191">MGVEVPPEESNRCVRGCCRSAAIPLHLPPSSFSLLSPIAKGSESTVYEARLGGERVAAKKPVLSTSDDLDKFHYQLQLLWWVLPIELDHPGLARLVAAHARPPNYLMFFDFFEPPNLADKIHVEEWNPSVQQVVTIATDLAKALQYLNILGIVHRDIKPANILIDKDFHPHLADFGLAMYQKDIKHVSVENWRSSGKPTGGFHKKNMVGTLIYMAPEILRKDIHTEKSDVYSFAISINELLTGVVPYTDLRAEAQAHTVLEMTYTEQQLTAAIVSQGLRPALALPESGAPPSLLSLIQRCWDSDPQQRPSFKDITEELKIIEKHIAVNSCSLASPANKSQNGNTEVHHYQEALSWLNQGELFAKGNKLDSTVDHWSDIFDQSSKYCPTLSWGSFATCGRRETMEDTHFMLPHMSEEKDLHAFGIFDGHRGSAAAEFSVRAVPGFLKQFNSNTSPTDALTEAFVRTDIAFREELILHQKSKRITQKNWHPGCTAVTALIVRNKLFVANAGDCRAILNRAGEPFPMTRDHVASCPKERERIVKEGTEVKWQIDTWRVGAAALQVTRSIGDDDLKPAVTAQPEVIETILSPDDEFLVMASDGLWDVMSNEDVLSIIKDTVKEPGMCSKRLATEAAARGSKDNITVIVVFLRPVSTAERIY</sequence>
<keyword id="KW-0025">Alternative splicing</keyword>
<keyword id="KW-0067">ATP-binding</keyword>
<keyword id="KW-0378">Hydrolase</keyword>
<keyword id="KW-0418">Kinase</keyword>
<keyword id="KW-0460">Magnesium</keyword>
<keyword id="KW-0464">Manganese</keyword>
<keyword id="KW-0479">Metal-binding</keyword>
<keyword id="KW-0511">Multifunctional enzyme</keyword>
<keyword id="KW-0547">Nucleotide-binding</keyword>
<keyword id="KW-0904">Protein phosphatase</keyword>
<keyword id="KW-1185">Reference proteome</keyword>
<keyword id="KW-0723">Serine/threonine-protein kinase</keyword>
<keyword id="KW-0808">Transferase</keyword>
<feature type="chain" id="PRO_0000363250" description="Protein kinase and PP2C-like domain-containing protein">
    <location>
        <begin position="1"/>
        <end position="657"/>
    </location>
</feature>
<feature type="domain" description="Protein kinase" evidence="2">
    <location>
        <begin position="32"/>
        <end position="327"/>
    </location>
</feature>
<feature type="domain" description="PPM-type phosphatase" evidence="3">
    <location>
        <begin position="390"/>
        <end position="647"/>
    </location>
</feature>
<feature type="active site" description="Proton acceptor; for kinase activity" evidence="2 4">
    <location>
        <position position="156"/>
    </location>
</feature>
<feature type="binding site" evidence="2">
    <location>
        <begin position="38"/>
        <end position="46"/>
    </location>
    <ligand>
        <name>ATP</name>
        <dbReference type="ChEBI" id="CHEBI:30616"/>
    </ligand>
</feature>
<feature type="binding site" evidence="2">
    <location>
        <position position="59"/>
    </location>
    <ligand>
        <name>ATP</name>
        <dbReference type="ChEBI" id="CHEBI:30616"/>
    </ligand>
</feature>
<feature type="binding site" evidence="1">
    <location>
        <position position="426"/>
    </location>
    <ligand>
        <name>Mn(2+)</name>
        <dbReference type="ChEBI" id="CHEBI:29035"/>
        <label>1</label>
    </ligand>
</feature>
<feature type="binding site" evidence="1">
    <location>
        <position position="426"/>
    </location>
    <ligand>
        <name>Mn(2+)</name>
        <dbReference type="ChEBI" id="CHEBI:29035"/>
        <label>2</label>
    </ligand>
</feature>
<feature type="binding site" evidence="1">
    <location>
        <position position="427"/>
    </location>
    <ligand>
        <name>Mn(2+)</name>
        <dbReference type="ChEBI" id="CHEBI:29035"/>
        <label>1</label>
    </ligand>
</feature>
<feature type="binding site" evidence="1">
    <location>
        <position position="598"/>
    </location>
    <ligand>
        <name>Mn(2+)</name>
        <dbReference type="ChEBI" id="CHEBI:29035"/>
        <label>2</label>
    </ligand>
</feature>
<feature type="binding site" evidence="1">
    <location>
        <position position="638"/>
    </location>
    <ligand>
        <name>Mn(2+)</name>
        <dbReference type="ChEBI" id="CHEBI:29035"/>
        <label>2</label>
    </ligand>
</feature>
<feature type="splice variant" id="VSP_036255" description="In isoform 2." evidence="5">
    <original>WWVLPI</original>
    <variation>C</variation>
    <location>
        <begin position="80"/>
        <end position="85"/>
    </location>
</feature>
<feature type="splice variant" id="VSP_036256" description="In isoform 3." evidence="5">
    <original>DHVASCPKERERIVKEGTEVKWQIDTWR</original>
    <variation>VRIIFLLYFARFLKFKHYNIRYVFILPW</variation>
    <location>
        <begin position="527"/>
        <end position="554"/>
    </location>
</feature>
<feature type="splice variant" id="VSP_036257" description="In isoform 3." evidence="5">
    <location>
        <begin position="555"/>
        <end position="657"/>
    </location>
</feature>
<feature type="sequence conflict" description="In Ref. 5; AK069784." evidence="5" ref="5">
    <original>P</original>
    <variation>H</variation>
    <location>
        <position position="442"/>
    </location>
</feature>
<comment type="catalytic activity">
    <reaction>
        <text>L-seryl-[protein] + ATP = O-phospho-L-seryl-[protein] + ADP + H(+)</text>
        <dbReference type="Rhea" id="RHEA:17989"/>
        <dbReference type="Rhea" id="RHEA-COMP:9863"/>
        <dbReference type="Rhea" id="RHEA-COMP:11604"/>
        <dbReference type="ChEBI" id="CHEBI:15378"/>
        <dbReference type="ChEBI" id="CHEBI:29999"/>
        <dbReference type="ChEBI" id="CHEBI:30616"/>
        <dbReference type="ChEBI" id="CHEBI:83421"/>
        <dbReference type="ChEBI" id="CHEBI:456216"/>
        <dbReference type="EC" id="2.7.11.1"/>
    </reaction>
</comment>
<comment type="catalytic activity">
    <reaction>
        <text>L-threonyl-[protein] + ATP = O-phospho-L-threonyl-[protein] + ADP + H(+)</text>
        <dbReference type="Rhea" id="RHEA:46608"/>
        <dbReference type="Rhea" id="RHEA-COMP:11060"/>
        <dbReference type="Rhea" id="RHEA-COMP:11605"/>
        <dbReference type="ChEBI" id="CHEBI:15378"/>
        <dbReference type="ChEBI" id="CHEBI:30013"/>
        <dbReference type="ChEBI" id="CHEBI:30616"/>
        <dbReference type="ChEBI" id="CHEBI:61977"/>
        <dbReference type="ChEBI" id="CHEBI:456216"/>
        <dbReference type="EC" id="2.7.11.1"/>
    </reaction>
</comment>
<comment type="catalytic activity">
    <reaction>
        <text>O-phospho-L-seryl-[protein] + H2O = L-seryl-[protein] + phosphate</text>
        <dbReference type="Rhea" id="RHEA:20629"/>
        <dbReference type="Rhea" id="RHEA-COMP:9863"/>
        <dbReference type="Rhea" id="RHEA-COMP:11604"/>
        <dbReference type="ChEBI" id="CHEBI:15377"/>
        <dbReference type="ChEBI" id="CHEBI:29999"/>
        <dbReference type="ChEBI" id="CHEBI:43474"/>
        <dbReference type="ChEBI" id="CHEBI:83421"/>
        <dbReference type="EC" id="3.1.3.16"/>
    </reaction>
</comment>
<comment type="catalytic activity">
    <reaction>
        <text>O-phospho-L-threonyl-[protein] + H2O = L-threonyl-[protein] + phosphate</text>
        <dbReference type="Rhea" id="RHEA:47004"/>
        <dbReference type="Rhea" id="RHEA-COMP:11060"/>
        <dbReference type="Rhea" id="RHEA-COMP:11605"/>
        <dbReference type="ChEBI" id="CHEBI:15377"/>
        <dbReference type="ChEBI" id="CHEBI:30013"/>
        <dbReference type="ChEBI" id="CHEBI:43474"/>
        <dbReference type="ChEBI" id="CHEBI:61977"/>
        <dbReference type="EC" id="3.1.3.16"/>
    </reaction>
</comment>
<comment type="cofactor">
    <cofactor evidence="1">
        <name>Mg(2+)</name>
        <dbReference type="ChEBI" id="CHEBI:18420"/>
    </cofactor>
    <cofactor evidence="1">
        <name>Mn(2+)</name>
        <dbReference type="ChEBI" id="CHEBI:29035"/>
    </cofactor>
    <text evidence="1">Binds 2 magnesium or manganese ions per subunit.</text>
</comment>
<comment type="alternative products">
    <event type="alternative splicing"/>
    <isoform>
        <id>Q5JJY4-1</id>
        <name>1</name>
        <sequence type="displayed"/>
    </isoform>
    <isoform>
        <id>Q5JJY4-2</id>
        <name>2</name>
        <sequence type="described" ref="VSP_036255"/>
    </isoform>
    <isoform>
        <id>Q5JJY4-3</id>
        <name>3</name>
        <sequence type="described" ref="VSP_036256 VSP_036257"/>
    </isoform>
</comment>
<comment type="miscellaneous">
    <molecule>Isoform 2</molecule>
    <text evidence="5">May be due to a competing donor splice site.</text>
</comment>
<comment type="similarity">
    <text evidence="5">In the N-terminal section; belongs to the protein kinase superfamily. Ser/Thr protein kinase family.</text>
</comment>
<comment type="similarity">
    <text evidence="5">In the C-terminal section; belongs to the PP2C family.</text>
</comment>
<dbReference type="EC" id="2.7.11.1"/>
<dbReference type="EC" id="3.1.3.16"/>
<dbReference type="EMBL" id="AP004361">
    <property type="protein sequence ID" value="BAD88224.1"/>
    <property type="molecule type" value="Genomic_DNA"/>
</dbReference>
<dbReference type="EMBL" id="AP008207">
    <property type="protein sequence ID" value="BAF05185.1"/>
    <property type="molecule type" value="Genomic_DNA"/>
</dbReference>
<dbReference type="EMBL" id="AP014957">
    <property type="protein sequence ID" value="BAS72571.1"/>
    <property type="molecule type" value="Genomic_DNA"/>
</dbReference>
<dbReference type="EMBL" id="AK069784">
    <property type="status" value="NOT_ANNOTATED_CDS"/>
    <property type="molecule type" value="mRNA"/>
</dbReference>
<dbReference type="SMR" id="Q5JJY4"/>
<dbReference type="FunCoup" id="Q5JJY4">
    <property type="interactions" value="322"/>
</dbReference>
<dbReference type="STRING" id="39947.Q5JJY4"/>
<dbReference type="PaxDb" id="39947-Q5JJY4"/>
<dbReference type="EnsemblPlants" id="Os01t0541900-01">
    <molecule id="Q5JJY4-1"/>
    <property type="protein sequence ID" value="Os01t0541900-01"/>
    <property type="gene ID" value="Os01g0541900"/>
</dbReference>
<dbReference type="Gramene" id="Os01t0541900-01">
    <molecule id="Q5JJY4-1"/>
    <property type="protein sequence ID" value="Os01t0541900-01"/>
    <property type="gene ID" value="Os01g0541900"/>
</dbReference>
<dbReference type="KEGG" id="dosa:Os01g0541900"/>
<dbReference type="eggNOG" id="KOG0192">
    <property type="taxonomic scope" value="Eukaryota"/>
</dbReference>
<dbReference type="eggNOG" id="KOG0698">
    <property type="taxonomic scope" value="Eukaryota"/>
</dbReference>
<dbReference type="HOGENOM" id="CLU_027681_1_0_1"/>
<dbReference type="InParanoid" id="Q5JJY4"/>
<dbReference type="OMA" id="HVEEWNP"/>
<dbReference type="Proteomes" id="UP000000763">
    <property type="component" value="Chromosome 1"/>
</dbReference>
<dbReference type="Proteomes" id="UP000059680">
    <property type="component" value="Chromosome 1"/>
</dbReference>
<dbReference type="GO" id="GO:0005524">
    <property type="term" value="F:ATP binding"/>
    <property type="evidence" value="ECO:0007669"/>
    <property type="project" value="UniProtKB-KW"/>
</dbReference>
<dbReference type="GO" id="GO:0046872">
    <property type="term" value="F:metal ion binding"/>
    <property type="evidence" value="ECO:0007669"/>
    <property type="project" value="UniProtKB-KW"/>
</dbReference>
<dbReference type="GO" id="GO:0106310">
    <property type="term" value="F:protein serine kinase activity"/>
    <property type="evidence" value="ECO:0007669"/>
    <property type="project" value="RHEA"/>
</dbReference>
<dbReference type="GO" id="GO:0004674">
    <property type="term" value="F:protein serine/threonine kinase activity"/>
    <property type="evidence" value="ECO:0007669"/>
    <property type="project" value="UniProtKB-KW"/>
</dbReference>
<dbReference type="GO" id="GO:0004722">
    <property type="term" value="F:protein serine/threonine phosphatase activity"/>
    <property type="evidence" value="ECO:0000318"/>
    <property type="project" value="GO_Central"/>
</dbReference>
<dbReference type="GO" id="GO:0019852">
    <property type="term" value="P:L-ascorbic acid metabolic process"/>
    <property type="evidence" value="ECO:0007669"/>
    <property type="project" value="EnsemblPlants"/>
</dbReference>
<dbReference type="GO" id="GO:1902531">
    <property type="term" value="P:regulation of intracellular signal transduction"/>
    <property type="evidence" value="ECO:0000318"/>
    <property type="project" value="GO_Central"/>
</dbReference>
<dbReference type="CDD" id="cd00143">
    <property type="entry name" value="PP2Cc"/>
    <property type="match status" value="1"/>
</dbReference>
<dbReference type="FunFam" id="3.60.40.10:FF:000035">
    <property type="entry name" value="Leucine rich repeat protein phosphatase 2c domain containing protein"/>
    <property type="match status" value="1"/>
</dbReference>
<dbReference type="FunFam" id="1.10.510.10:FF:000683">
    <property type="entry name" value="Protein kinase and PP2C-like domain-containing protein"/>
    <property type="match status" value="1"/>
</dbReference>
<dbReference type="Gene3D" id="3.60.40.10">
    <property type="entry name" value="PPM-type phosphatase domain"/>
    <property type="match status" value="1"/>
</dbReference>
<dbReference type="Gene3D" id="1.10.510.10">
    <property type="entry name" value="Transferase(Phosphotransferase) domain 1"/>
    <property type="match status" value="1"/>
</dbReference>
<dbReference type="InterPro" id="IPR011009">
    <property type="entry name" value="Kinase-like_dom_sf"/>
</dbReference>
<dbReference type="InterPro" id="IPR015655">
    <property type="entry name" value="PP2C"/>
</dbReference>
<dbReference type="InterPro" id="IPR036457">
    <property type="entry name" value="PPM-type-like_dom_sf"/>
</dbReference>
<dbReference type="InterPro" id="IPR001932">
    <property type="entry name" value="PPM-type_phosphatase-like_dom"/>
</dbReference>
<dbReference type="InterPro" id="IPR000719">
    <property type="entry name" value="Prot_kinase_dom"/>
</dbReference>
<dbReference type="InterPro" id="IPR008271">
    <property type="entry name" value="Ser/Thr_kinase_AS"/>
</dbReference>
<dbReference type="PANTHER" id="PTHR47992">
    <property type="entry name" value="PROTEIN PHOSPHATASE"/>
    <property type="match status" value="1"/>
</dbReference>
<dbReference type="Pfam" id="PF00069">
    <property type="entry name" value="Pkinase"/>
    <property type="match status" value="1"/>
</dbReference>
<dbReference type="Pfam" id="PF00481">
    <property type="entry name" value="PP2C"/>
    <property type="match status" value="1"/>
</dbReference>
<dbReference type="SMART" id="SM00331">
    <property type="entry name" value="PP2C_SIG"/>
    <property type="match status" value="1"/>
</dbReference>
<dbReference type="SMART" id="SM00332">
    <property type="entry name" value="PP2Cc"/>
    <property type="match status" value="1"/>
</dbReference>
<dbReference type="SMART" id="SM00220">
    <property type="entry name" value="S_TKc"/>
    <property type="match status" value="1"/>
</dbReference>
<dbReference type="SUPFAM" id="SSF81606">
    <property type="entry name" value="PP2C-like"/>
    <property type="match status" value="1"/>
</dbReference>
<dbReference type="SUPFAM" id="SSF56112">
    <property type="entry name" value="Protein kinase-like (PK-like)"/>
    <property type="match status" value="1"/>
</dbReference>
<dbReference type="PROSITE" id="PS51746">
    <property type="entry name" value="PPM_2"/>
    <property type="match status" value="1"/>
</dbReference>
<dbReference type="PROSITE" id="PS50011">
    <property type="entry name" value="PROTEIN_KINASE_DOM"/>
    <property type="match status" value="1"/>
</dbReference>
<dbReference type="PROSITE" id="PS00108">
    <property type="entry name" value="PROTEIN_KINASE_ST"/>
    <property type="match status" value="1"/>
</dbReference>
<gene>
    <name type="ordered locus">Os01g0541900</name>
    <name type="ordered locus">LOC_Os01g36080</name>
    <name type="ORF">OSJNBa0062A24.20</name>
</gene>
<protein>
    <recommendedName>
        <fullName>Protein kinase and PP2C-like domain-containing protein</fullName>
    </recommendedName>
    <domain>
        <recommendedName>
            <fullName>Probable serine/threonine-protein kinase Os01g0541900</fullName>
            <ecNumber>2.7.11.1</ecNumber>
        </recommendedName>
    </domain>
    <domain>
        <recommendedName>
            <fullName>Probable protein phosphatase 2C 4</fullName>
            <shortName>OsPP2C04</shortName>
            <ecNumber>3.1.3.16</ecNumber>
        </recommendedName>
    </domain>
</protein>
<evidence type="ECO:0000250" key="1"/>
<evidence type="ECO:0000255" key="2">
    <source>
        <dbReference type="PROSITE-ProRule" id="PRU00159"/>
    </source>
</evidence>
<evidence type="ECO:0000255" key="3">
    <source>
        <dbReference type="PROSITE-ProRule" id="PRU01082"/>
    </source>
</evidence>
<evidence type="ECO:0000255" key="4">
    <source>
        <dbReference type="PROSITE-ProRule" id="PRU10027"/>
    </source>
</evidence>
<evidence type="ECO:0000305" key="5"/>